<accession>Q62FB8</accession>
<dbReference type="EC" id="2.7.7.3" evidence="1"/>
<dbReference type="EMBL" id="CP000010">
    <property type="protein sequence ID" value="AAU48105.1"/>
    <property type="molecule type" value="Genomic_DNA"/>
</dbReference>
<dbReference type="RefSeq" id="WP_004195249.1">
    <property type="nucleotide sequence ID" value="NC_006348.1"/>
</dbReference>
<dbReference type="RefSeq" id="YP_104609.1">
    <property type="nucleotide sequence ID" value="NC_006348.1"/>
</dbReference>
<dbReference type="SMR" id="Q62FB8"/>
<dbReference type="GeneID" id="93059037"/>
<dbReference type="KEGG" id="bma:BMA3125"/>
<dbReference type="PATRIC" id="fig|243160.12.peg.3201"/>
<dbReference type="eggNOG" id="COG0669">
    <property type="taxonomic scope" value="Bacteria"/>
</dbReference>
<dbReference type="HOGENOM" id="CLU_100149_0_1_4"/>
<dbReference type="UniPathway" id="UPA00241">
    <property type="reaction ID" value="UER00355"/>
</dbReference>
<dbReference type="Proteomes" id="UP000006693">
    <property type="component" value="Chromosome 1"/>
</dbReference>
<dbReference type="GO" id="GO:0005737">
    <property type="term" value="C:cytoplasm"/>
    <property type="evidence" value="ECO:0007669"/>
    <property type="project" value="UniProtKB-SubCell"/>
</dbReference>
<dbReference type="GO" id="GO:0005524">
    <property type="term" value="F:ATP binding"/>
    <property type="evidence" value="ECO:0007669"/>
    <property type="project" value="UniProtKB-KW"/>
</dbReference>
<dbReference type="GO" id="GO:0004595">
    <property type="term" value="F:pantetheine-phosphate adenylyltransferase activity"/>
    <property type="evidence" value="ECO:0007669"/>
    <property type="project" value="UniProtKB-UniRule"/>
</dbReference>
<dbReference type="GO" id="GO:0015937">
    <property type="term" value="P:coenzyme A biosynthetic process"/>
    <property type="evidence" value="ECO:0007669"/>
    <property type="project" value="UniProtKB-UniRule"/>
</dbReference>
<dbReference type="CDD" id="cd02163">
    <property type="entry name" value="PPAT"/>
    <property type="match status" value="1"/>
</dbReference>
<dbReference type="Gene3D" id="3.40.50.620">
    <property type="entry name" value="HUPs"/>
    <property type="match status" value="1"/>
</dbReference>
<dbReference type="HAMAP" id="MF_00151">
    <property type="entry name" value="PPAT_bact"/>
    <property type="match status" value="1"/>
</dbReference>
<dbReference type="InterPro" id="IPR004821">
    <property type="entry name" value="Cyt_trans-like"/>
</dbReference>
<dbReference type="InterPro" id="IPR001980">
    <property type="entry name" value="PPAT"/>
</dbReference>
<dbReference type="InterPro" id="IPR014729">
    <property type="entry name" value="Rossmann-like_a/b/a_fold"/>
</dbReference>
<dbReference type="NCBIfam" id="TIGR01510">
    <property type="entry name" value="coaD_prev_kdtB"/>
    <property type="match status" value="1"/>
</dbReference>
<dbReference type="NCBIfam" id="TIGR00125">
    <property type="entry name" value="cyt_tran_rel"/>
    <property type="match status" value="1"/>
</dbReference>
<dbReference type="PANTHER" id="PTHR21342">
    <property type="entry name" value="PHOSPHOPANTETHEINE ADENYLYLTRANSFERASE"/>
    <property type="match status" value="1"/>
</dbReference>
<dbReference type="PANTHER" id="PTHR21342:SF1">
    <property type="entry name" value="PHOSPHOPANTETHEINE ADENYLYLTRANSFERASE"/>
    <property type="match status" value="1"/>
</dbReference>
<dbReference type="Pfam" id="PF01467">
    <property type="entry name" value="CTP_transf_like"/>
    <property type="match status" value="1"/>
</dbReference>
<dbReference type="PRINTS" id="PR01020">
    <property type="entry name" value="LPSBIOSNTHSS"/>
</dbReference>
<dbReference type="SUPFAM" id="SSF52374">
    <property type="entry name" value="Nucleotidylyl transferase"/>
    <property type="match status" value="1"/>
</dbReference>
<name>COAD_BURMA</name>
<keyword id="KW-0067">ATP-binding</keyword>
<keyword id="KW-0173">Coenzyme A biosynthesis</keyword>
<keyword id="KW-0963">Cytoplasm</keyword>
<keyword id="KW-0460">Magnesium</keyword>
<keyword id="KW-0547">Nucleotide-binding</keyword>
<keyword id="KW-0548">Nucleotidyltransferase</keyword>
<keyword id="KW-1185">Reference proteome</keyword>
<keyword id="KW-0808">Transferase</keyword>
<feature type="chain" id="PRO_0000156186" description="Phosphopantetheine adenylyltransferase">
    <location>
        <begin position="1"/>
        <end position="166"/>
    </location>
</feature>
<feature type="binding site" evidence="1">
    <location>
        <begin position="9"/>
        <end position="10"/>
    </location>
    <ligand>
        <name>ATP</name>
        <dbReference type="ChEBI" id="CHEBI:30616"/>
    </ligand>
</feature>
<feature type="binding site" evidence="1">
    <location>
        <position position="9"/>
    </location>
    <ligand>
        <name>substrate</name>
    </ligand>
</feature>
<feature type="binding site" evidence="1">
    <location>
        <position position="17"/>
    </location>
    <ligand>
        <name>ATP</name>
        <dbReference type="ChEBI" id="CHEBI:30616"/>
    </ligand>
</feature>
<feature type="binding site" evidence="1">
    <location>
        <position position="41"/>
    </location>
    <ligand>
        <name>substrate</name>
    </ligand>
</feature>
<feature type="binding site" evidence="1">
    <location>
        <position position="73"/>
    </location>
    <ligand>
        <name>substrate</name>
    </ligand>
</feature>
<feature type="binding site" evidence="1">
    <location>
        <position position="87"/>
    </location>
    <ligand>
        <name>substrate</name>
    </ligand>
</feature>
<feature type="binding site" evidence="1">
    <location>
        <begin position="88"/>
        <end position="90"/>
    </location>
    <ligand>
        <name>ATP</name>
        <dbReference type="ChEBI" id="CHEBI:30616"/>
    </ligand>
</feature>
<feature type="binding site" evidence="1">
    <location>
        <position position="98"/>
    </location>
    <ligand>
        <name>ATP</name>
        <dbReference type="ChEBI" id="CHEBI:30616"/>
    </ligand>
</feature>
<feature type="binding site" evidence="1">
    <location>
        <begin position="123"/>
        <end position="129"/>
    </location>
    <ligand>
        <name>ATP</name>
        <dbReference type="ChEBI" id="CHEBI:30616"/>
    </ligand>
</feature>
<feature type="site" description="Transition state stabilizer" evidence="1">
    <location>
        <position position="17"/>
    </location>
</feature>
<reference key="1">
    <citation type="journal article" date="2004" name="Proc. Natl. Acad. Sci. U.S.A.">
        <title>Structural flexibility in the Burkholderia mallei genome.</title>
        <authorList>
            <person name="Nierman W.C."/>
            <person name="DeShazer D."/>
            <person name="Kim H.S."/>
            <person name="Tettelin H."/>
            <person name="Nelson K.E."/>
            <person name="Feldblyum T.V."/>
            <person name="Ulrich R.L."/>
            <person name="Ronning C.M."/>
            <person name="Brinkac L.M."/>
            <person name="Daugherty S.C."/>
            <person name="Davidsen T.D."/>
            <person name="DeBoy R.T."/>
            <person name="Dimitrov G."/>
            <person name="Dodson R.J."/>
            <person name="Durkin A.S."/>
            <person name="Gwinn M.L."/>
            <person name="Haft D.H."/>
            <person name="Khouri H.M."/>
            <person name="Kolonay J.F."/>
            <person name="Madupu R."/>
            <person name="Mohammoud Y."/>
            <person name="Nelson W.C."/>
            <person name="Radune D."/>
            <person name="Romero C.M."/>
            <person name="Sarria S."/>
            <person name="Selengut J."/>
            <person name="Shamblin C."/>
            <person name="Sullivan S.A."/>
            <person name="White O."/>
            <person name="Yu Y."/>
            <person name="Zafar N."/>
            <person name="Zhou L."/>
            <person name="Fraser C.M."/>
        </authorList>
    </citation>
    <scope>NUCLEOTIDE SEQUENCE [LARGE SCALE GENOMIC DNA]</scope>
    <source>
        <strain>ATCC 23344</strain>
    </source>
</reference>
<gene>
    <name evidence="1" type="primary">coaD</name>
    <name type="ordered locus">BMA3125</name>
</gene>
<protein>
    <recommendedName>
        <fullName evidence="1">Phosphopantetheine adenylyltransferase</fullName>
        <ecNumber evidence="1">2.7.7.3</ecNumber>
    </recommendedName>
    <alternativeName>
        <fullName evidence="1">Dephospho-CoA pyrophosphorylase</fullName>
    </alternativeName>
    <alternativeName>
        <fullName evidence="1">Pantetheine-phosphate adenylyltransferase</fullName>
        <shortName evidence="1">PPAT</shortName>
    </alternativeName>
</protein>
<proteinExistence type="inferred from homology"/>
<comment type="function">
    <text evidence="1">Reversibly transfers an adenylyl group from ATP to 4'-phosphopantetheine, yielding dephospho-CoA (dPCoA) and pyrophosphate.</text>
</comment>
<comment type="catalytic activity">
    <reaction evidence="1">
        <text>(R)-4'-phosphopantetheine + ATP + H(+) = 3'-dephospho-CoA + diphosphate</text>
        <dbReference type="Rhea" id="RHEA:19801"/>
        <dbReference type="ChEBI" id="CHEBI:15378"/>
        <dbReference type="ChEBI" id="CHEBI:30616"/>
        <dbReference type="ChEBI" id="CHEBI:33019"/>
        <dbReference type="ChEBI" id="CHEBI:57328"/>
        <dbReference type="ChEBI" id="CHEBI:61723"/>
        <dbReference type="EC" id="2.7.7.3"/>
    </reaction>
</comment>
<comment type="cofactor">
    <cofactor evidence="1">
        <name>Mg(2+)</name>
        <dbReference type="ChEBI" id="CHEBI:18420"/>
    </cofactor>
</comment>
<comment type="pathway">
    <text evidence="1">Cofactor biosynthesis; coenzyme A biosynthesis; CoA from (R)-pantothenate: step 4/5.</text>
</comment>
<comment type="subunit">
    <text evidence="1">Homohexamer.</text>
</comment>
<comment type="subcellular location">
    <subcellularLocation>
        <location evidence="1">Cytoplasm</location>
    </subcellularLocation>
</comment>
<comment type="similarity">
    <text evidence="1">Belongs to the bacterial CoaD family.</text>
</comment>
<sequence length="166" mass="18530">MVVAVYPGTFDPLTRGHEDLVRRASSIFDTLVVGVADSRAKKPFFSLEERLKIANEVLGHYPNVKVMGFTGLLKDFVRANDARVIVRGLRAVSDFEYEFQMAGMNRYLLPDVETMFMTPSDQYQFISGTIVREIAQLGGDVSKFVFPSVEKWLTEKVAAMAQGPSA</sequence>
<evidence type="ECO:0000255" key="1">
    <source>
        <dbReference type="HAMAP-Rule" id="MF_00151"/>
    </source>
</evidence>
<organism>
    <name type="scientific">Burkholderia mallei (strain ATCC 23344)</name>
    <dbReference type="NCBI Taxonomy" id="243160"/>
    <lineage>
        <taxon>Bacteria</taxon>
        <taxon>Pseudomonadati</taxon>
        <taxon>Pseudomonadota</taxon>
        <taxon>Betaproteobacteria</taxon>
        <taxon>Burkholderiales</taxon>
        <taxon>Burkholderiaceae</taxon>
        <taxon>Burkholderia</taxon>
        <taxon>pseudomallei group</taxon>
    </lineage>
</organism>